<organism>
    <name type="scientific">Nicotiana tabacum</name>
    <name type="common">Common tobacco</name>
    <dbReference type="NCBI Taxonomy" id="4097"/>
    <lineage>
        <taxon>Eukaryota</taxon>
        <taxon>Viridiplantae</taxon>
        <taxon>Streptophyta</taxon>
        <taxon>Embryophyta</taxon>
        <taxon>Tracheophyta</taxon>
        <taxon>Spermatophyta</taxon>
        <taxon>Magnoliopsida</taxon>
        <taxon>eudicotyledons</taxon>
        <taxon>Gunneridae</taxon>
        <taxon>Pentapetalae</taxon>
        <taxon>asterids</taxon>
        <taxon>lamiids</taxon>
        <taxon>Solanales</taxon>
        <taxon>Solanaceae</taxon>
        <taxon>Nicotianoideae</taxon>
        <taxon>Nicotianeae</taxon>
        <taxon>Nicotiana</taxon>
    </lineage>
</organism>
<gene>
    <name type="primary">SAMDC</name>
</gene>
<feature type="chain" id="PRO_0000030027" description="S-adenosylmethionine decarboxylase beta chain" evidence="1">
    <location>
        <begin position="1"/>
        <end position="72"/>
    </location>
</feature>
<feature type="chain" id="PRO_0000030028" description="S-adenosylmethionine decarboxylase alpha chain" evidence="1">
    <location>
        <begin position="73"/>
        <end position="361"/>
    </location>
</feature>
<feature type="active site" evidence="1">
    <location>
        <position position="13"/>
    </location>
</feature>
<feature type="active site" evidence="1">
    <location>
        <position position="16"/>
    </location>
</feature>
<feature type="active site" description="Schiff-base intermediate with substrate; via pyruvic acid" evidence="1">
    <location>
        <position position="73"/>
    </location>
</feature>
<feature type="active site" description="Proton donor; for catalytic activity" evidence="1">
    <location>
        <position position="87"/>
    </location>
</feature>
<feature type="active site" description="Proton acceptor; for processing activity" evidence="1">
    <location>
        <position position="236"/>
    </location>
</feature>
<feature type="active site" description="Proton acceptor; for processing activity" evidence="1">
    <location>
        <position position="249"/>
    </location>
</feature>
<feature type="site" description="Cleavage (non-hydrolytic); by autolysis" evidence="1">
    <location>
        <begin position="72"/>
        <end position="73"/>
    </location>
</feature>
<feature type="modified residue" description="Pyruvic acid (Ser); by autocatalysis" evidence="1">
    <location>
        <position position="73"/>
    </location>
</feature>
<feature type="sequence conflict" description="In Ref. 2; AAB88854." evidence="2" ref="2">
    <original>E</original>
    <variation>Q</variation>
    <location>
        <position position="285"/>
    </location>
</feature>
<feature type="sequence conflict" description="In Ref. 2; AAB88854." evidence="2" ref="2">
    <original>V</original>
    <variation>L</variation>
    <location>
        <position position="308"/>
    </location>
</feature>
<evidence type="ECO:0000250" key="1"/>
<evidence type="ECO:0000305" key="2"/>
<comment type="catalytic activity">
    <reaction>
        <text>S-adenosyl-L-methionine + H(+) = S-adenosyl 3-(methylsulfanyl)propylamine + CO2</text>
        <dbReference type="Rhea" id="RHEA:15981"/>
        <dbReference type="ChEBI" id="CHEBI:15378"/>
        <dbReference type="ChEBI" id="CHEBI:16526"/>
        <dbReference type="ChEBI" id="CHEBI:57443"/>
        <dbReference type="ChEBI" id="CHEBI:59789"/>
        <dbReference type="EC" id="4.1.1.50"/>
    </reaction>
</comment>
<comment type="cofactor">
    <cofactor evidence="1">
        <name>pyruvate</name>
        <dbReference type="ChEBI" id="CHEBI:15361"/>
    </cofactor>
    <text evidence="1">Binds 1 pyruvoyl group covalently per subunit.</text>
</comment>
<comment type="pathway">
    <text>Amine and polyamine biosynthesis; S-adenosylmethioninamine biosynthesis; S-adenosylmethioninamine from S-adenosyl-L-methionine: step 1/1.</text>
</comment>
<comment type="PTM">
    <text evidence="1">Is synthesized initially as an inactive proenzyme. Formation of the active enzyme involves a self-maturation process in which the active site pyruvoyl group is generated from an internal serine residue via an autocatalytic post-translational modification. Two non-identical subunits are generated from the proenzyme in this reaction, and the pyruvate is formed at the N-terminus of the alpha chain, which is derived from the carboxyl end of the proenzyme. The post-translation cleavage follows an unusual pathway, termed non-hydrolytic serinolysis, in which the side chain hydroxyl group of the serine supplies its oxygen atom to form the C-terminus of the beta chain, while the remainder of the serine residue undergoes an oxidative deamination to produce ammonia and the pyruvoyl group blocking the N-terminus of the alpha chain (By similarity).</text>
</comment>
<comment type="similarity">
    <text evidence="2">Belongs to the eukaryotic AdoMetDC family.</text>
</comment>
<protein>
    <recommendedName>
        <fullName>S-adenosylmethionine decarboxylase proenzyme</fullName>
        <shortName>AdoMetDC</shortName>
        <shortName>SAMDC</shortName>
        <ecNumber>4.1.1.50</ecNumber>
    </recommendedName>
    <component>
        <recommendedName>
            <fullName>S-adenosylmethionine decarboxylase alpha chain</fullName>
        </recommendedName>
    </component>
    <component>
        <recommendedName>
            <fullName>S-adenosylmethionine decarboxylase beta chain</fullName>
        </recommendedName>
    </component>
</protein>
<reference key="1">
    <citation type="submission" date="1997-04" db="EMBL/GenBank/DDBJ databases">
        <authorList>
            <person name="Paramale S.R."/>
            <person name="Ernst S.G."/>
        </authorList>
    </citation>
    <scope>NUCLEOTIDE SEQUENCE [MRNA]</scope>
    <source>
        <strain>cv. Samsun</strain>
    </source>
</reference>
<reference key="2">
    <citation type="submission" date="1997-11" db="EMBL/GenBank/DDBJ databases">
        <authorList>
            <person name="Paramale S.R."/>
            <person name="Ernst S.G."/>
        </authorList>
    </citation>
    <scope>NUCLEOTIDE SEQUENCE [GENOMIC DNA]</scope>
    <source>
        <strain>cv. Xanthi</strain>
    </source>
</reference>
<accession>O04009</accession>
<accession>O49005</accession>
<dbReference type="EC" id="4.1.1.50"/>
<dbReference type="EMBL" id="U91924">
    <property type="protein sequence ID" value="AAB51301.1"/>
    <property type="molecule type" value="mRNA"/>
</dbReference>
<dbReference type="EMBL" id="AF033100">
    <property type="protein sequence ID" value="AAB88854.1"/>
    <property type="molecule type" value="Genomic_DNA"/>
</dbReference>
<dbReference type="PIR" id="T01934">
    <property type="entry name" value="T01934"/>
</dbReference>
<dbReference type="RefSeq" id="NP_001312627.1">
    <property type="nucleotide sequence ID" value="NM_001325698.2"/>
</dbReference>
<dbReference type="SMR" id="O04009"/>
<dbReference type="STRING" id="4097.O04009"/>
<dbReference type="PaxDb" id="4097-O04009"/>
<dbReference type="GeneID" id="107801519"/>
<dbReference type="KEGG" id="nta:107801519"/>
<dbReference type="OrthoDB" id="1068353at2759"/>
<dbReference type="UniPathway" id="UPA00331">
    <property type="reaction ID" value="UER00451"/>
</dbReference>
<dbReference type="Proteomes" id="UP000084051">
    <property type="component" value="Unplaced"/>
</dbReference>
<dbReference type="GO" id="GO:0005829">
    <property type="term" value="C:cytosol"/>
    <property type="evidence" value="ECO:0000318"/>
    <property type="project" value="GO_Central"/>
</dbReference>
<dbReference type="GO" id="GO:0004014">
    <property type="term" value="F:adenosylmethionine decarboxylase activity"/>
    <property type="evidence" value="ECO:0000318"/>
    <property type="project" value="GO_Central"/>
</dbReference>
<dbReference type="GO" id="GO:0008295">
    <property type="term" value="P:spermidine biosynthetic process"/>
    <property type="evidence" value="ECO:0000318"/>
    <property type="project" value="GO_Central"/>
</dbReference>
<dbReference type="GO" id="GO:0006597">
    <property type="term" value="P:spermine biosynthetic process"/>
    <property type="evidence" value="ECO:0000318"/>
    <property type="project" value="GO_Central"/>
</dbReference>
<dbReference type="FunFam" id="3.30.360.50:FF:000001">
    <property type="entry name" value="S-adenosylmethionine decarboxylase proenzyme"/>
    <property type="match status" value="1"/>
</dbReference>
<dbReference type="FunFam" id="3.60.90.10:FF:000002">
    <property type="entry name" value="S-adenosylmethionine decarboxylase proenzyme"/>
    <property type="match status" value="1"/>
</dbReference>
<dbReference type="Gene3D" id="3.30.360.50">
    <property type="entry name" value="S-adenosylmethionine decarboxylase"/>
    <property type="match status" value="1"/>
</dbReference>
<dbReference type="Gene3D" id="3.60.90.10">
    <property type="entry name" value="S-adenosylmethionine decarboxylase"/>
    <property type="match status" value="1"/>
</dbReference>
<dbReference type="InterPro" id="IPR048283">
    <property type="entry name" value="AdoMetDC-like"/>
</dbReference>
<dbReference type="InterPro" id="IPR001985">
    <property type="entry name" value="S-AdoMet_decarboxylase_euk"/>
</dbReference>
<dbReference type="InterPro" id="IPR016067">
    <property type="entry name" value="S-AdoMet_deCO2ase_core"/>
</dbReference>
<dbReference type="InterPro" id="IPR018166">
    <property type="entry name" value="S-AdoMet_deCO2ase_CS"/>
</dbReference>
<dbReference type="NCBIfam" id="TIGR00535">
    <property type="entry name" value="SAM_DCase"/>
    <property type="match status" value="1"/>
</dbReference>
<dbReference type="PANTHER" id="PTHR11570">
    <property type="entry name" value="S-ADENOSYLMETHIONINE DECARBOXYLASE"/>
    <property type="match status" value="1"/>
</dbReference>
<dbReference type="PANTHER" id="PTHR11570:SF15">
    <property type="entry name" value="S-ADENOSYLMETHIONINE DECARBOXYLASE PROENZYME 3"/>
    <property type="match status" value="1"/>
</dbReference>
<dbReference type="Pfam" id="PF01536">
    <property type="entry name" value="SAM_decarbox"/>
    <property type="match status" value="1"/>
</dbReference>
<dbReference type="PIRSF" id="PIRSF001355">
    <property type="entry name" value="S-AdenosylMet_decarboxylase"/>
    <property type="match status" value="1"/>
</dbReference>
<dbReference type="SUPFAM" id="SSF56276">
    <property type="entry name" value="S-adenosylmethionine decarboxylase"/>
    <property type="match status" value="1"/>
</dbReference>
<dbReference type="PROSITE" id="PS01336">
    <property type="entry name" value="ADOMETDC"/>
    <property type="match status" value="1"/>
</dbReference>
<proteinExistence type="evidence at transcript level"/>
<keyword id="KW-0068">Autocatalytic cleavage</keyword>
<keyword id="KW-0210">Decarboxylase</keyword>
<keyword id="KW-0456">Lyase</keyword>
<keyword id="KW-0620">Polyamine biosynthesis</keyword>
<keyword id="KW-0670">Pyruvate</keyword>
<keyword id="KW-1185">Reference proteome</keyword>
<keyword id="KW-0949">S-adenosyl-L-methionine</keyword>
<keyword id="KW-0704">Schiff base</keyword>
<keyword id="KW-0745">Spermidine biosynthesis</keyword>
<keyword id="KW-0865">Zymogen</keyword>
<name>DCAM_TOBAC</name>
<sequence length="361" mass="39637">MDSALPVSAIGFEGFEKRLEISFFEPGLFADPNGKGLRSLSKAQLDEILGPAECTIVDSLSNDDVDSYVLSESSLFVYSYKIIIKTCGTTKLLLAIPPILKLAETLSLKVQDVRYTRGSFIFPGAQSFPHRHFSEEVAVLDGYFGKLAAGSKAVIMGSPDKAQKWHVYSASAGPIQSNDPVYTLEMCMTGLDREKASVFYKTEGSSAAHMTVRSGIRKILPNSEICDFEFEPCGYSMNSIEGAALSTIHITPEDGFSYASFEAVGYDMKTMKLGPLVERVLACFEPDEFSIALHADVATKLLERVCSVDVKGYSLAEWSPEEFGKGGSIVYQKFTRTPFCGSPKSVLKGCWKEDEEKEEKE</sequence>